<keyword id="KW-0963">Cytoplasm</keyword>
<keyword id="KW-0328">Glycosyltransferase</keyword>
<keyword id="KW-0660">Purine salvage</keyword>
<keyword id="KW-0808">Transferase</keyword>
<gene>
    <name evidence="1" type="primary">xpt1</name>
    <name type="ordered locus">CPF_0319</name>
</gene>
<organism>
    <name type="scientific">Clostridium perfringens (strain ATCC 13124 / DSM 756 / JCM 1290 / NCIMB 6125 / NCTC 8237 / Type A)</name>
    <dbReference type="NCBI Taxonomy" id="195103"/>
    <lineage>
        <taxon>Bacteria</taxon>
        <taxon>Bacillati</taxon>
        <taxon>Bacillota</taxon>
        <taxon>Clostridia</taxon>
        <taxon>Eubacteriales</taxon>
        <taxon>Clostridiaceae</taxon>
        <taxon>Clostridium</taxon>
    </lineage>
</organism>
<sequence>MEALKEKILKEGKVREGNILKVDCFLNHQMDIKFLNEVGKEFRKRFEGEKVDKILTIEASGIAIAGIASQYFDYVPVVFAKKTESLNLDKDVYESNVHSFTKKKDYKVRVGKQFLNKGERVLIIDDFLAQGCATKGMIDLVEQAGAELVGIGIVIEKGFQDGRKVLEDLGVRVESLAIIDKLEDNKVYFK</sequence>
<accession>Q0TUB1</accession>
<protein>
    <recommendedName>
        <fullName evidence="1">Xanthine phosphoribosyltransferase 1</fullName>
        <shortName evidence="1">XPRTase 1</shortName>
        <ecNumber evidence="1">2.4.2.22</ecNumber>
    </recommendedName>
</protein>
<name>XPT1_CLOP1</name>
<reference key="1">
    <citation type="journal article" date="2006" name="Genome Res.">
        <title>Skewed genomic variability in strains of the toxigenic bacterial pathogen, Clostridium perfringens.</title>
        <authorList>
            <person name="Myers G.S.A."/>
            <person name="Rasko D.A."/>
            <person name="Cheung J.K."/>
            <person name="Ravel J."/>
            <person name="Seshadri R."/>
            <person name="DeBoy R.T."/>
            <person name="Ren Q."/>
            <person name="Varga J."/>
            <person name="Awad M.M."/>
            <person name="Brinkac L.M."/>
            <person name="Daugherty S.C."/>
            <person name="Haft D.H."/>
            <person name="Dodson R.J."/>
            <person name="Madupu R."/>
            <person name="Nelson W.C."/>
            <person name="Rosovitz M.J."/>
            <person name="Sullivan S.A."/>
            <person name="Khouri H."/>
            <person name="Dimitrov G.I."/>
            <person name="Watkins K.L."/>
            <person name="Mulligan S."/>
            <person name="Benton J."/>
            <person name="Radune D."/>
            <person name="Fisher D.J."/>
            <person name="Atkins H.S."/>
            <person name="Hiscox T."/>
            <person name="Jost B.H."/>
            <person name="Billington S.J."/>
            <person name="Songer J.G."/>
            <person name="McClane B.A."/>
            <person name="Titball R.W."/>
            <person name="Rood J.I."/>
            <person name="Melville S.B."/>
            <person name="Paulsen I.T."/>
        </authorList>
    </citation>
    <scope>NUCLEOTIDE SEQUENCE [LARGE SCALE GENOMIC DNA]</scope>
    <source>
        <strain>ATCC 13124 / DSM 756 / JCM 1290 / NCIMB 6125 / NCTC 8237 / S 107 / Type A</strain>
    </source>
</reference>
<dbReference type="EC" id="2.4.2.22" evidence="1"/>
<dbReference type="EMBL" id="CP000246">
    <property type="protein sequence ID" value="ABG83036.1"/>
    <property type="molecule type" value="Genomic_DNA"/>
</dbReference>
<dbReference type="RefSeq" id="WP_003458080.1">
    <property type="nucleotide sequence ID" value="NC_008261.1"/>
</dbReference>
<dbReference type="SMR" id="Q0TUB1"/>
<dbReference type="STRING" id="195103.CPF_0319"/>
<dbReference type="PaxDb" id="195103-CPF_0319"/>
<dbReference type="KEGG" id="cpf:CPF_0319"/>
<dbReference type="eggNOG" id="COG0503">
    <property type="taxonomic scope" value="Bacteria"/>
</dbReference>
<dbReference type="HOGENOM" id="CLU_099015_0_0_9"/>
<dbReference type="UniPathway" id="UPA00602">
    <property type="reaction ID" value="UER00658"/>
</dbReference>
<dbReference type="Proteomes" id="UP000001823">
    <property type="component" value="Chromosome"/>
</dbReference>
<dbReference type="GO" id="GO:0005737">
    <property type="term" value="C:cytoplasm"/>
    <property type="evidence" value="ECO:0007669"/>
    <property type="project" value="UniProtKB-SubCell"/>
</dbReference>
<dbReference type="GO" id="GO:0000310">
    <property type="term" value="F:xanthine phosphoribosyltransferase activity"/>
    <property type="evidence" value="ECO:0007669"/>
    <property type="project" value="UniProtKB-UniRule"/>
</dbReference>
<dbReference type="GO" id="GO:0006166">
    <property type="term" value="P:purine ribonucleoside salvage"/>
    <property type="evidence" value="ECO:0007669"/>
    <property type="project" value="UniProtKB-KW"/>
</dbReference>
<dbReference type="GO" id="GO:0046110">
    <property type="term" value="P:xanthine metabolic process"/>
    <property type="evidence" value="ECO:0007669"/>
    <property type="project" value="InterPro"/>
</dbReference>
<dbReference type="GO" id="GO:0032265">
    <property type="term" value="P:XMP salvage"/>
    <property type="evidence" value="ECO:0007669"/>
    <property type="project" value="UniProtKB-UniRule"/>
</dbReference>
<dbReference type="CDD" id="cd06223">
    <property type="entry name" value="PRTases_typeI"/>
    <property type="match status" value="1"/>
</dbReference>
<dbReference type="Gene3D" id="3.40.50.2020">
    <property type="match status" value="1"/>
</dbReference>
<dbReference type="HAMAP" id="MF_01184">
    <property type="entry name" value="XPRTase"/>
    <property type="match status" value="1"/>
</dbReference>
<dbReference type="InterPro" id="IPR000836">
    <property type="entry name" value="PRibTrfase_dom"/>
</dbReference>
<dbReference type="InterPro" id="IPR029057">
    <property type="entry name" value="PRTase-like"/>
</dbReference>
<dbReference type="InterPro" id="IPR050118">
    <property type="entry name" value="Pur/Pyrimidine_PRTase"/>
</dbReference>
<dbReference type="InterPro" id="IPR010079">
    <property type="entry name" value="Xanthine_PRibTrfase"/>
</dbReference>
<dbReference type="NCBIfam" id="NF006671">
    <property type="entry name" value="PRK09219.1"/>
    <property type="match status" value="1"/>
</dbReference>
<dbReference type="NCBIfam" id="TIGR01744">
    <property type="entry name" value="XPRTase"/>
    <property type="match status" value="1"/>
</dbReference>
<dbReference type="PANTHER" id="PTHR43864">
    <property type="entry name" value="HYPOXANTHINE/GUANINE PHOSPHORIBOSYLTRANSFERASE"/>
    <property type="match status" value="1"/>
</dbReference>
<dbReference type="PANTHER" id="PTHR43864:SF1">
    <property type="entry name" value="XANTHINE PHOSPHORIBOSYLTRANSFERASE"/>
    <property type="match status" value="1"/>
</dbReference>
<dbReference type="Pfam" id="PF00156">
    <property type="entry name" value="Pribosyltran"/>
    <property type="match status" value="1"/>
</dbReference>
<dbReference type="SUPFAM" id="SSF53271">
    <property type="entry name" value="PRTase-like"/>
    <property type="match status" value="1"/>
</dbReference>
<comment type="function">
    <text evidence="1">Converts the preformed base xanthine, a product of nucleic acid breakdown, to xanthosine 5'-monophosphate (XMP), so it can be reused for RNA or DNA synthesis.</text>
</comment>
<comment type="catalytic activity">
    <reaction evidence="1">
        <text>XMP + diphosphate = xanthine + 5-phospho-alpha-D-ribose 1-diphosphate</text>
        <dbReference type="Rhea" id="RHEA:10800"/>
        <dbReference type="ChEBI" id="CHEBI:17712"/>
        <dbReference type="ChEBI" id="CHEBI:33019"/>
        <dbReference type="ChEBI" id="CHEBI:57464"/>
        <dbReference type="ChEBI" id="CHEBI:58017"/>
        <dbReference type="EC" id="2.4.2.22"/>
    </reaction>
</comment>
<comment type="pathway">
    <text evidence="1">Purine metabolism; XMP biosynthesis via salvage pathway; XMP from xanthine: step 1/1.</text>
</comment>
<comment type="subunit">
    <text evidence="1">Homodimer.</text>
</comment>
<comment type="subcellular location">
    <subcellularLocation>
        <location evidence="1">Cytoplasm</location>
    </subcellularLocation>
</comment>
<comment type="similarity">
    <text evidence="1">Belongs to the purine/pyrimidine phosphoribosyltransferase family. Xpt subfamily.</text>
</comment>
<evidence type="ECO:0000255" key="1">
    <source>
        <dbReference type="HAMAP-Rule" id="MF_01184"/>
    </source>
</evidence>
<proteinExistence type="inferred from homology"/>
<feature type="chain" id="PRO_0000339689" description="Xanthine phosphoribosyltransferase 1">
    <location>
        <begin position="1"/>
        <end position="190"/>
    </location>
</feature>
<feature type="binding site" evidence="1">
    <location>
        <position position="20"/>
    </location>
    <ligand>
        <name>xanthine</name>
        <dbReference type="ChEBI" id="CHEBI:17712"/>
    </ligand>
</feature>
<feature type="binding site" evidence="1">
    <location>
        <position position="27"/>
    </location>
    <ligand>
        <name>xanthine</name>
        <dbReference type="ChEBI" id="CHEBI:17712"/>
    </ligand>
</feature>
<feature type="binding site" evidence="1">
    <location>
        <begin position="129"/>
        <end position="133"/>
    </location>
    <ligand>
        <name>5-phospho-alpha-D-ribose 1-diphosphate</name>
        <dbReference type="ChEBI" id="CHEBI:58017"/>
    </ligand>
</feature>
<feature type="binding site" evidence="1">
    <location>
        <position position="157"/>
    </location>
    <ligand>
        <name>xanthine</name>
        <dbReference type="ChEBI" id="CHEBI:17712"/>
    </ligand>
</feature>